<sequence>MNWNEILFWLLKSGLFFFILITACAYYTLAERKVAGFIQDRKGPNRAGIWGLLQPLADGIKFLTKEEVFPTQVNKIMYLIAPAISMTCAIMAWSVVPLGGRIPLPQWLQDRTGLVFLDLQIANPDTGILFLFAISSLAVYGIIIAGWASNNKYSLLGAIRSTAQMISYELPLSMSVVSIVILTGSLKLTDISASQAGLWNIFKLPGFIAFCLFVVAMFAETNRLPFDLAEAESELVVGFHTEYGAFKFALFFIAEYMNMITMSCVVTLLFFGGYQVPFGILEGHVLQSLFGLFFFLGKVLFFTFLFVWVRWTLPRFRYDQLMSLGWKKLIPWAVLNILIASLYIQF</sequence>
<comment type="function">
    <text evidence="1">NDH-1 shuttles electrons from NADH, via FMN and iron-sulfur (Fe-S) centers, to quinones in the respiratory chain. The immediate electron acceptor for the enzyme in this species is believed to be ubiquinone. Couples the redox reaction to proton translocation (for every two electrons transferred, four hydrogen ions are translocated across the cytoplasmic membrane), and thus conserves the redox energy in a proton gradient. This subunit may bind ubiquinone.</text>
</comment>
<comment type="catalytic activity">
    <reaction evidence="1">
        <text>a quinone + NADH + 5 H(+)(in) = a quinol + NAD(+) + 4 H(+)(out)</text>
        <dbReference type="Rhea" id="RHEA:57888"/>
        <dbReference type="ChEBI" id="CHEBI:15378"/>
        <dbReference type="ChEBI" id="CHEBI:24646"/>
        <dbReference type="ChEBI" id="CHEBI:57540"/>
        <dbReference type="ChEBI" id="CHEBI:57945"/>
        <dbReference type="ChEBI" id="CHEBI:132124"/>
    </reaction>
</comment>
<comment type="subunit">
    <text evidence="1">NDH-1 is composed of 14 different subunits. Subunits NuoA, H, J, K, L, M, N constitute the membrane sector of the complex.</text>
</comment>
<comment type="subcellular location">
    <subcellularLocation>
        <location evidence="1">Cell inner membrane</location>
        <topology evidence="1">Multi-pass membrane protein</topology>
    </subcellularLocation>
</comment>
<comment type="similarity">
    <text evidence="1">Belongs to the complex I subunit 1 family.</text>
</comment>
<gene>
    <name evidence="1" type="primary">nuoH</name>
    <name type="ordered locus">LBJ_0507</name>
</gene>
<evidence type="ECO:0000255" key="1">
    <source>
        <dbReference type="HAMAP-Rule" id="MF_01350"/>
    </source>
</evidence>
<accession>Q04V66</accession>
<dbReference type="EC" id="7.1.1.-" evidence="1"/>
<dbReference type="EMBL" id="CP000350">
    <property type="protein sequence ID" value="ABJ75204.1"/>
    <property type="molecule type" value="Genomic_DNA"/>
</dbReference>
<dbReference type="RefSeq" id="WP_002735619.1">
    <property type="nucleotide sequence ID" value="NC_008510.1"/>
</dbReference>
<dbReference type="SMR" id="Q04V66"/>
<dbReference type="GeneID" id="61172704"/>
<dbReference type="KEGG" id="lbj:LBJ_0507"/>
<dbReference type="HOGENOM" id="CLU_015134_0_1_12"/>
<dbReference type="Proteomes" id="UP000000656">
    <property type="component" value="Chromosome 1"/>
</dbReference>
<dbReference type="GO" id="GO:0005886">
    <property type="term" value="C:plasma membrane"/>
    <property type="evidence" value="ECO:0007669"/>
    <property type="project" value="UniProtKB-SubCell"/>
</dbReference>
<dbReference type="GO" id="GO:0003954">
    <property type="term" value="F:NADH dehydrogenase activity"/>
    <property type="evidence" value="ECO:0007669"/>
    <property type="project" value="TreeGrafter"/>
</dbReference>
<dbReference type="GO" id="GO:0016655">
    <property type="term" value="F:oxidoreductase activity, acting on NAD(P)H, quinone or similar compound as acceptor"/>
    <property type="evidence" value="ECO:0007669"/>
    <property type="project" value="UniProtKB-UniRule"/>
</dbReference>
<dbReference type="GO" id="GO:0048038">
    <property type="term" value="F:quinone binding"/>
    <property type="evidence" value="ECO:0007669"/>
    <property type="project" value="UniProtKB-KW"/>
</dbReference>
<dbReference type="GO" id="GO:0009060">
    <property type="term" value="P:aerobic respiration"/>
    <property type="evidence" value="ECO:0007669"/>
    <property type="project" value="TreeGrafter"/>
</dbReference>
<dbReference type="HAMAP" id="MF_01350">
    <property type="entry name" value="NDH1_NuoH"/>
    <property type="match status" value="1"/>
</dbReference>
<dbReference type="InterPro" id="IPR001694">
    <property type="entry name" value="NADH_UbQ_OxRdtase_su1/FPO"/>
</dbReference>
<dbReference type="InterPro" id="IPR018086">
    <property type="entry name" value="NADH_UbQ_OxRdtase_su1_CS"/>
</dbReference>
<dbReference type="NCBIfam" id="NF004741">
    <property type="entry name" value="PRK06076.1-2"/>
    <property type="match status" value="1"/>
</dbReference>
<dbReference type="PANTHER" id="PTHR11432">
    <property type="entry name" value="NADH DEHYDROGENASE SUBUNIT 1"/>
    <property type="match status" value="1"/>
</dbReference>
<dbReference type="PANTHER" id="PTHR11432:SF3">
    <property type="entry name" value="NADH-UBIQUINONE OXIDOREDUCTASE CHAIN 1"/>
    <property type="match status" value="1"/>
</dbReference>
<dbReference type="Pfam" id="PF00146">
    <property type="entry name" value="NADHdh"/>
    <property type="match status" value="1"/>
</dbReference>
<dbReference type="PROSITE" id="PS00668">
    <property type="entry name" value="COMPLEX1_ND1_2"/>
    <property type="match status" value="1"/>
</dbReference>
<proteinExistence type="inferred from homology"/>
<reference key="1">
    <citation type="journal article" date="2006" name="Proc. Natl. Acad. Sci. U.S.A.">
        <title>Genome reduction in Leptospira borgpetersenii reflects limited transmission potential.</title>
        <authorList>
            <person name="Bulach D.M."/>
            <person name="Zuerner R.L."/>
            <person name="Wilson P."/>
            <person name="Seemann T."/>
            <person name="McGrath A."/>
            <person name="Cullen P.A."/>
            <person name="Davis J."/>
            <person name="Johnson M."/>
            <person name="Kuczek E."/>
            <person name="Alt D.P."/>
            <person name="Peterson-Burch B."/>
            <person name="Coppel R.L."/>
            <person name="Rood J.I."/>
            <person name="Davies J.K."/>
            <person name="Adler B."/>
        </authorList>
    </citation>
    <scope>NUCLEOTIDE SEQUENCE [LARGE SCALE GENOMIC DNA]</scope>
    <source>
        <strain>JB197</strain>
    </source>
</reference>
<feature type="chain" id="PRO_0000298820" description="NADH-quinone oxidoreductase subunit H">
    <location>
        <begin position="1"/>
        <end position="346"/>
    </location>
</feature>
<feature type="transmembrane region" description="Helical" evidence="1">
    <location>
        <begin position="6"/>
        <end position="26"/>
    </location>
</feature>
<feature type="transmembrane region" description="Helical" evidence="1">
    <location>
        <begin position="76"/>
        <end position="96"/>
    </location>
</feature>
<feature type="transmembrane region" description="Helical" evidence="1">
    <location>
        <begin position="128"/>
        <end position="148"/>
    </location>
</feature>
<feature type="transmembrane region" description="Helical" evidence="1">
    <location>
        <begin position="166"/>
        <end position="186"/>
    </location>
</feature>
<feature type="transmembrane region" description="Helical" evidence="1">
    <location>
        <begin position="198"/>
        <end position="218"/>
    </location>
</feature>
<feature type="transmembrane region" description="Helical" evidence="1">
    <location>
        <begin position="260"/>
        <end position="280"/>
    </location>
</feature>
<feature type="transmembrane region" description="Helical" evidence="1">
    <location>
        <begin position="289"/>
        <end position="309"/>
    </location>
</feature>
<feature type="transmembrane region" description="Helical" evidence="1">
    <location>
        <begin position="324"/>
        <end position="344"/>
    </location>
</feature>
<organism>
    <name type="scientific">Leptospira borgpetersenii serovar Hardjo-bovis (strain JB197)</name>
    <dbReference type="NCBI Taxonomy" id="355277"/>
    <lineage>
        <taxon>Bacteria</taxon>
        <taxon>Pseudomonadati</taxon>
        <taxon>Spirochaetota</taxon>
        <taxon>Spirochaetia</taxon>
        <taxon>Leptospirales</taxon>
        <taxon>Leptospiraceae</taxon>
        <taxon>Leptospira</taxon>
    </lineage>
</organism>
<name>NUOH_LEPBJ</name>
<protein>
    <recommendedName>
        <fullName evidence="1">NADH-quinone oxidoreductase subunit H</fullName>
        <ecNumber evidence="1">7.1.1.-</ecNumber>
    </recommendedName>
    <alternativeName>
        <fullName evidence="1">NADH dehydrogenase I subunit H</fullName>
    </alternativeName>
    <alternativeName>
        <fullName evidence="1">NDH-1 subunit H</fullName>
    </alternativeName>
</protein>
<keyword id="KW-0997">Cell inner membrane</keyword>
<keyword id="KW-1003">Cell membrane</keyword>
<keyword id="KW-0472">Membrane</keyword>
<keyword id="KW-0520">NAD</keyword>
<keyword id="KW-0874">Quinone</keyword>
<keyword id="KW-1278">Translocase</keyword>
<keyword id="KW-0812">Transmembrane</keyword>
<keyword id="KW-1133">Transmembrane helix</keyword>
<keyword id="KW-0830">Ubiquinone</keyword>